<accession>P49871</accession>
<protein>
    <recommendedName>
        <fullName>Actin, muscle</fullName>
        <ecNumber evidence="2">3.6.4.-</ecNumber>
    </recommendedName>
</protein>
<proteinExistence type="evidence at transcript level"/>
<comment type="function">
    <text>Actins are highly conserved proteins that are involved in various types of cell motility and are ubiquitously expressed in all eukaryotic cells.</text>
</comment>
<comment type="catalytic activity">
    <reaction evidence="2">
        <text>ATP + H2O = ADP + phosphate + H(+)</text>
        <dbReference type="Rhea" id="RHEA:13065"/>
        <dbReference type="ChEBI" id="CHEBI:15377"/>
        <dbReference type="ChEBI" id="CHEBI:15378"/>
        <dbReference type="ChEBI" id="CHEBI:30616"/>
        <dbReference type="ChEBI" id="CHEBI:43474"/>
        <dbReference type="ChEBI" id="CHEBI:456216"/>
    </reaction>
</comment>
<comment type="subcellular location">
    <subcellularLocation>
        <location>Cytoplasm</location>
        <location>Cytoskeleton</location>
    </subcellularLocation>
</comment>
<comment type="PTM">
    <text evidence="1">Oxidation of Met-45 to form methionine sulfoxide promotes actin filament depolymerization. Methionine sulfoxide is produced stereospecifically, but it is not known whether the (S)-S-oxide or the (R)-S-oxide is produced (By similarity).</text>
</comment>
<comment type="similarity">
    <text evidence="3">Belongs to the actin family.</text>
</comment>
<dbReference type="EC" id="3.6.4.-" evidence="2"/>
<dbReference type="EMBL" id="L13764">
    <property type="protein sequence ID" value="AAA02814.1"/>
    <property type="molecule type" value="mRNA"/>
</dbReference>
<dbReference type="RefSeq" id="XP_030028518.1">
    <property type="nucleotide sequence ID" value="XM_030172658.2"/>
</dbReference>
<dbReference type="SMR" id="P49871"/>
<dbReference type="EnsemblMetazoa" id="XM_030172658.2">
    <property type="protein sequence ID" value="XP_030028518.1"/>
    <property type="gene ID" value="LOC115446098"/>
</dbReference>
<dbReference type="GeneID" id="115446098"/>
<dbReference type="OrthoDB" id="5952856at2759"/>
<dbReference type="GO" id="GO:0005737">
    <property type="term" value="C:cytoplasm"/>
    <property type="evidence" value="ECO:0007669"/>
    <property type="project" value="UniProtKB-KW"/>
</dbReference>
<dbReference type="GO" id="GO:0005856">
    <property type="term" value="C:cytoskeleton"/>
    <property type="evidence" value="ECO:0007669"/>
    <property type="project" value="UniProtKB-SubCell"/>
</dbReference>
<dbReference type="GO" id="GO:0005524">
    <property type="term" value="F:ATP binding"/>
    <property type="evidence" value="ECO:0007669"/>
    <property type="project" value="UniProtKB-KW"/>
</dbReference>
<dbReference type="GO" id="GO:0016787">
    <property type="term" value="F:hydrolase activity"/>
    <property type="evidence" value="ECO:0007669"/>
    <property type="project" value="UniProtKB-KW"/>
</dbReference>
<dbReference type="CDD" id="cd10224">
    <property type="entry name" value="ASKHA_NBD_actin"/>
    <property type="match status" value="1"/>
</dbReference>
<dbReference type="FunFam" id="3.30.420.40:FF:000131">
    <property type="entry name" value="Actin, alpha skeletal muscle"/>
    <property type="match status" value="1"/>
</dbReference>
<dbReference type="FunFam" id="3.30.420.40:FF:000291">
    <property type="entry name" value="Actin, alpha skeletal muscle"/>
    <property type="match status" value="1"/>
</dbReference>
<dbReference type="FunFam" id="3.90.640.10:FF:000047">
    <property type="entry name" value="Actin, alpha skeletal muscle"/>
    <property type="match status" value="1"/>
</dbReference>
<dbReference type="FunFam" id="3.30.420.40:FF:000058">
    <property type="entry name" value="Putative actin-related protein 5"/>
    <property type="match status" value="1"/>
</dbReference>
<dbReference type="Gene3D" id="3.30.420.40">
    <property type="match status" value="2"/>
</dbReference>
<dbReference type="Gene3D" id="3.90.640.10">
    <property type="entry name" value="Actin, Chain A, domain 4"/>
    <property type="match status" value="1"/>
</dbReference>
<dbReference type="InterPro" id="IPR004000">
    <property type="entry name" value="Actin"/>
</dbReference>
<dbReference type="InterPro" id="IPR020902">
    <property type="entry name" value="Actin/actin-like_CS"/>
</dbReference>
<dbReference type="InterPro" id="IPR004001">
    <property type="entry name" value="Actin_CS"/>
</dbReference>
<dbReference type="InterPro" id="IPR043129">
    <property type="entry name" value="ATPase_NBD"/>
</dbReference>
<dbReference type="PANTHER" id="PTHR11937">
    <property type="entry name" value="ACTIN"/>
    <property type="match status" value="1"/>
</dbReference>
<dbReference type="Pfam" id="PF00022">
    <property type="entry name" value="Actin"/>
    <property type="match status" value="1"/>
</dbReference>
<dbReference type="PRINTS" id="PR00190">
    <property type="entry name" value="ACTIN"/>
</dbReference>
<dbReference type="SMART" id="SM00268">
    <property type="entry name" value="ACTIN"/>
    <property type="match status" value="1"/>
</dbReference>
<dbReference type="SUPFAM" id="SSF53067">
    <property type="entry name" value="Actin-like ATPase domain"/>
    <property type="match status" value="2"/>
</dbReference>
<dbReference type="PROSITE" id="PS00406">
    <property type="entry name" value="ACTINS_1"/>
    <property type="match status" value="1"/>
</dbReference>
<dbReference type="PROSITE" id="PS00432">
    <property type="entry name" value="ACTINS_2"/>
    <property type="match status" value="1"/>
</dbReference>
<dbReference type="PROSITE" id="PS01132">
    <property type="entry name" value="ACTINS_ACT_LIKE"/>
    <property type="match status" value="1"/>
</dbReference>
<organism>
    <name type="scientific">Manduca sexta</name>
    <name type="common">Tobacco hawkmoth</name>
    <name type="synonym">Tobacco hornworm</name>
    <dbReference type="NCBI Taxonomy" id="7130"/>
    <lineage>
        <taxon>Eukaryota</taxon>
        <taxon>Metazoa</taxon>
        <taxon>Ecdysozoa</taxon>
        <taxon>Arthropoda</taxon>
        <taxon>Hexapoda</taxon>
        <taxon>Insecta</taxon>
        <taxon>Pterygota</taxon>
        <taxon>Neoptera</taxon>
        <taxon>Endopterygota</taxon>
        <taxon>Lepidoptera</taxon>
        <taxon>Glossata</taxon>
        <taxon>Ditrysia</taxon>
        <taxon>Bombycoidea</taxon>
        <taxon>Sphingidae</taxon>
        <taxon>Sphinginae</taxon>
        <taxon>Sphingini</taxon>
        <taxon>Manduca</taxon>
    </lineage>
</organism>
<feature type="propeptide" id="PRO_0000000698" description="Removed in mature form" evidence="1">
    <location>
        <begin position="1"/>
        <end position="2"/>
    </location>
</feature>
<feature type="chain" id="PRO_0000000699" description="Actin, muscle">
    <location>
        <begin position="3"/>
        <end position="376"/>
    </location>
</feature>
<feature type="modified residue" description="N-acetylaspartate" evidence="1">
    <location>
        <position position="3"/>
    </location>
</feature>
<feature type="modified residue" description="Methionine sulfoxide" evidence="1">
    <location>
        <position position="45"/>
    </location>
</feature>
<feature type="modified residue" description="Methionine sulfoxide" evidence="1">
    <location>
        <position position="48"/>
    </location>
</feature>
<name>ACT_MANSE</name>
<evidence type="ECO:0000250" key="1"/>
<evidence type="ECO:0000250" key="2">
    <source>
        <dbReference type="UniProtKB" id="P68137"/>
    </source>
</evidence>
<evidence type="ECO:0000305" key="3"/>
<reference key="1">
    <citation type="journal article" date="1993" name="Dev. Biol.">
        <title>Selective repression of actin and myosin heavy chain expression during the programmed death of insect skeletal muscle.</title>
        <authorList>
            <person name="Schwartz L.M."/>
            <person name="Jones M.E."/>
            <person name="Kosz L."/>
            <person name="Kuah K."/>
        </authorList>
    </citation>
    <scope>NUCLEOTIDE SEQUENCE [MRNA]</scope>
    <source>
        <tissue>Intersegmental muscle</tissue>
    </source>
</reference>
<keyword id="KW-0007">Acetylation</keyword>
<keyword id="KW-0067">ATP-binding</keyword>
<keyword id="KW-0963">Cytoplasm</keyword>
<keyword id="KW-0206">Cytoskeleton</keyword>
<keyword id="KW-0378">Hydrolase</keyword>
<keyword id="KW-0514">Muscle protein</keyword>
<keyword id="KW-0547">Nucleotide-binding</keyword>
<keyword id="KW-0558">Oxidation</keyword>
<sequence length="376" mass="41777">MCDDDVAALVVDNGSGMCKAGFAGDDAPRAVFPSIVGRPRHQGVMVGMGQKDSYVGDEAQSKRGILTLKYPIEHGIITNWDDMEKIWHHTFYNELRVAPEEHPVLLTEAPLNPKANREKMTQIMFETFNSPAMYVAIQAVLSLYASGRTTGIVLDSGDGVSHTVPIYEGYALPHAILRLDLAGRDLTDYLMKILTERGYSFTTTAEREIVRDIKEKLCYVALDFEQEMATAAASTSLEKSYELPDGQVITIGNERFRCPEALFQPSFLGMESCGIHETVYNSIMKCDVDIRKDLYANTVMSGGTTMYPGIADRMQKEITALAPSTIKIKIIAPPERKYSVWIGGSILASLSTFQQMWISKEEYDESGPGIVHRKCF</sequence>